<sequence length="312" mass="32337">MKVAVLGAAGGIGQALALLLKTQLPSGSELSLYDIAPVTPGVAVDLSHIPTAVKIKGFSGEDATPALEGADVVLISAGVARKPGMDRSDLFNVNAGIVKNLVQQVAKTCPKACIGIITNPVNTTVAIAAEVLKKAGVYDKNKLFGVTTLDIIRSNTFVAELKGKQPGEVEVPVIGGHSGVTILPLLSQVPGVSFTEQEVADLTKRIQNAGTEVVEAKAGGGSATLSMGQAAARFGLSLVRALQGEQGVVECAYVEGDGQYARFFSQPLLLGKNGVEERKSIGTLSAFEQNALEGMLDTLKKDIALGEEFVNK</sequence>
<feature type="chain" id="PRO_0000294294" description="Malate dehydrogenase">
    <location>
        <begin position="1"/>
        <end position="312"/>
    </location>
</feature>
<feature type="active site" description="Proton acceptor" evidence="1">
    <location>
        <position position="177"/>
    </location>
</feature>
<feature type="binding site" evidence="1">
    <location>
        <begin position="7"/>
        <end position="13"/>
    </location>
    <ligand>
        <name>NAD(+)</name>
        <dbReference type="ChEBI" id="CHEBI:57540"/>
    </ligand>
</feature>
<feature type="binding site" evidence="1">
    <location>
        <position position="34"/>
    </location>
    <ligand>
        <name>NAD(+)</name>
        <dbReference type="ChEBI" id="CHEBI:57540"/>
    </ligand>
</feature>
<feature type="binding site" evidence="1">
    <location>
        <position position="81"/>
    </location>
    <ligand>
        <name>substrate</name>
    </ligand>
</feature>
<feature type="binding site" evidence="1">
    <location>
        <position position="87"/>
    </location>
    <ligand>
        <name>substrate</name>
    </ligand>
</feature>
<feature type="binding site" evidence="1">
    <location>
        <position position="94"/>
    </location>
    <ligand>
        <name>NAD(+)</name>
        <dbReference type="ChEBI" id="CHEBI:57540"/>
    </ligand>
</feature>
<feature type="binding site" evidence="1">
    <location>
        <begin position="117"/>
        <end position="119"/>
    </location>
    <ligand>
        <name>NAD(+)</name>
        <dbReference type="ChEBI" id="CHEBI:57540"/>
    </ligand>
</feature>
<feature type="binding site" evidence="1">
    <location>
        <position position="119"/>
    </location>
    <ligand>
        <name>substrate</name>
    </ligand>
</feature>
<feature type="binding site" evidence="1">
    <location>
        <position position="153"/>
    </location>
    <ligand>
        <name>substrate</name>
    </ligand>
</feature>
<feature type="binding site" evidence="1">
    <location>
        <position position="227"/>
    </location>
    <ligand>
        <name>NAD(+)</name>
        <dbReference type="ChEBI" id="CHEBI:57540"/>
    </ligand>
</feature>
<evidence type="ECO:0000255" key="1">
    <source>
        <dbReference type="HAMAP-Rule" id="MF_01516"/>
    </source>
</evidence>
<comment type="function">
    <text evidence="1">Catalyzes the reversible oxidation of malate to oxaloacetate.</text>
</comment>
<comment type="catalytic activity">
    <reaction evidence="1">
        <text>(S)-malate + NAD(+) = oxaloacetate + NADH + H(+)</text>
        <dbReference type="Rhea" id="RHEA:21432"/>
        <dbReference type="ChEBI" id="CHEBI:15378"/>
        <dbReference type="ChEBI" id="CHEBI:15589"/>
        <dbReference type="ChEBI" id="CHEBI:16452"/>
        <dbReference type="ChEBI" id="CHEBI:57540"/>
        <dbReference type="ChEBI" id="CHEBI:57945"/>
        <dbReference type="EC" id="1.1.1.37"/>
    </reaction>
</comment>
<comment type="subunit">
    <text evidence="1">Homodimer.</text>
</comment>
<comment type="similarity">
    <text evidence="1">Belongs to the LDH/MDH superfamily. MDH type 1 family.</text>
</comment>
<keyword id="KW-0520">NAD</keyword>
<keyword id="KW-0560">Oxidoreductase</keyword>
<keyword id="KW-1185">Reference proteome</keyword>
<keyword id="KW-0816">Tricarboxylic acid cycle</keyword>
<accession>A1AGC9</accession>
<dbReference type="EC" id="1.1.1.37" evidence="1"/>
<dbReference type="EMBL" id="CP000468">
    <property type="protein sequence ID" value="ABJ02719.1"/>
    <property type="molecule type" value="Genomic_DNA"/>
</dbReference>
<dbReference type="RefSeq" id="WP_001295272.1">
    <property type="nucleotide sequence ID" value="NZ_CADILS010000003.1"/>
</dbReference>
<dbReference type="SMR" id="A1AGC9"/>
<dbReference type="GeneID" id="93778749"/>
<dbReference type="KEGG" id="ecv:APECO1_3208"/>
<dbReference type="HOGENOM" id="CLU_047181_0_1_6"/>
<dbReference type="Proteomes" id="UP000008216">
    <property type="component" value="Chromosome"/>
</dbReference>
<dbReference type="GO" id="GO:0005737">
    <property type="term" value="C:cytoplasm"/>
    <property type="evidence" value="ECO:0007669"/>
    <property type="project" value="TreeGrafter"/>
</dbReference>
<dbReference type="GO" id="GO:0030060">
    <property type="term" value="F:L-malate dehydrogenase (NAD+) activity"/>
    <property type="evidence" value="ECO:0007669"/>
    <property type="project" value="UniProtKB-UniRule"/>
</dbReference>
<dbReference type="GO" id="GO:0006108">
    <property type="term" value="P:malate metabolic process"/>
    <property type="evidence" value="ECO:0007669"/>
    <property type="project" value="InterPro"/>
</dbReference>
<dbReference type="GO" id="GO:0006099">
    <property type="term" value="P:tricarboxylic acid cycle"/>
    <property type="evidence" value="ECO:0007669"/>
    <property type="project" value="UniProtKB-UniRule"/>
</dbReference>
<dbReference type="CDD" id="cd01337">
    <property type="entry name" value="MDH_glyoxysomal_mitochondrial"/>
    <property type="match status" value="1"/>
</dbReference>
<dbReference type="FunFam" id="3.40.50.720:FF:000017">
    <property type="entry name" value="Malate dehydrogenase"/>
    <property type="match status" value="1"/>
</dbReference>
<dbReference type="FunFam" id="3.90.110.10:FF:000001">
    <property type="entry name" value="Malate dehydrogenase"/>
    <property type="match status" value="1"/>
</dbReference>
<dbReference type="Gene3D" id="3.90.110.10">
    <property type="entry name" value="Lactate dehydrogenase/glycoside hydrolase, family 4, C-terminal"/>
    <property type="match status" value="1"/>
</dbReference>
<dbReference type="Gene3D" id="3.40.50.720">
    <property type="entry name" value="NAD(P)-binding Rossmann-like Domain"/>
    <property type="match status" value="1"/>
</dbReference>
<dbReference type="HAMAP" id="MF_01516">
    <property type="entry name" value="Malate_dehydrog_1"/>
    <property type="match status" value="1"/>
</dbReference>
<dbReference type="InterPro" id="IPR001557">
    <property type="entry name" value="L-lactate/malate_DH"/>
</dbReference>
<dbReference type="InterPro" id="IPR022383">
    <property type="entry name" value="Lactate/malate_DH_C"/>
</dbReference>
<dbReference type="InterPro" id="IPR001236">
    <property type="entry name" value="Lactate/malate_DH_N"/>
</dbReference>
<dbReference type="InterPro" id="IPR015955">
    <property type="entry name" value="Lactate_DH/Glyco_Ohase_4_C"/>
</dbReference>
<dbReference type="InterPro" id="IPR001252">
    <property type="entry name" value="Malate_DH_AS"/>
</dbReference>
<dbReference type="InterPro" id="IPR010097">
    <property type="entry name" value="Malate_DH_type1"/>
</dbReference>
<dbReference type="InterPro" id="IPR023958">
    <property type="entry name" value="Malate_DH_type1_bac"/>
</dbReference>
<dbReference type="InterPro" id="IPR036291">
    <property type="entry name" value="NAD(P)-bd_dom_sf"/>
</dbReference>
<dbReference type="NCBIfam" id="TIGR01772">
    <property type="entry name" value="MDH_euk_gproteo"/>
    <property type="match status" value="1"/>
</dbReference>
<dbReference type="PANTHER" id="PTHR11540">
    <property type="entry name" value="MALATE AND LACTATE DEHYDROGENASE"/>
    <property type="match status" value="1"/>
</dbReference>
<dbReference type="PANTHER" id="PTHR11540:SF16">
    <property type="entry name" value="MALATE DEHYDROGENASE, MITOCHONDRIAL"/>
    <property type="match status" value="1"/>
</dbReference>
<dbReference type="Pfam" id="PF02866">
    <property type="entry name" value="Ldh_1_C"/>
    <property type="match status" value="1"/>
</dbReference>
<dbReference type="Pfam" id="PF00056">
    <property type="entry name" value="Ldh_1_N"/>
    <property type="match status" value="1"/>
</dbReference>
<dbReference type="PIRSF" id="PIRSF000102">
    <property type="entry name" value="Lac_mal_DH"/>
    <property type="match status" value="1"/>
</dbReference>
<dbReference type="SUPFAM" id="SSF56327">
    <property type="entry name" value="LDH C-terminal domain-like"/>
    <property type="match status" value="1"/>
</dbReference>
<dbReference type="SUPFAM" id="SSF51735">
    <property type="entry name" value="NAD(P)-binding Rossmann-fold domains"/>
    <property type="match status" value="1"/>
</dbReference>
<dbReference type="PROSITE" id="PS00068">
    <property type="entry name" value="MDH"/>
    <property type="match status" value="1"/>
</dbReference>
<name>MDH_ECOK1</name>
<protein>
    <recommendedName>
        <fullName evidence="1">Malate dehydrogenase</fullName>
        <ecNumber evidence="1">1.1.1.37</ecNumber>
    </recommendedName>
</protein>
<gene>
    <name evidence="1" type="primary">mdh</name>
    <name type="ordered locus">Ecok1_32250</name>
    <name type="ORF">APECO1_3208</name>
</gene>
<organism>
    <name type="scientific">Escherichia coli O1:K1 / APEC</name>
    <dbReference type="NCBI Taxonomy" id="405955"/>
    <lineage>
        <taxon>Bacteria</taxon>
        <taxon>Pseudomonadati</taxon>
        <taxon>Pseudomonadota</taxon>
        <taxon>Gammaproteobacteria</taxon>
        <taxon>Enterobacterales</taxon>
        <taxon>Enterobacteriaceae</taxon>
        <taxon>Escherichia</taxon>
    </lineage>
</organism>
<reference key="1">
    <citation type="journal article" date="2007" name="J. Bacteriol.">
        <title>The genome sequence of avian pathogenic Escherichia coli strain O1:K1:H7 shares strong similarities with human extraintestinal pathogenic E. coli genomes.</title>
        <authorList>
            <person name="Johnson T.J."/>
            <person name="Kariyawasam S."/>
            <person name="Wannemuehler Y."/>
            <person name="Mangiamele P."/>
            <person name="Johnson S.J."/>
            <person name="Doetkott C."/>
            <person name="Skyberg J.A."/>
            <person name="Lynne A.M."/>
            <person name="Johnson J.R."/>
            <person name="Nolan L.K."/>
        </authorList>
    </citation>
    <scope>NUCLEOTIDE SEQUENCE [LARGE SCALE GENOMIC DNA]</scope>
</reference>
<proteinExistence type="inferred from homology"/>